<keyword id="KW-0028">Amino-acid biosynthesis</keyword>
<keyword id="KW-0963">Cytoplasm</keyword>
<keyword id="KW-0368">Histidine biosynthesis</keyword>
<keyword id="KW-0378">Hydrolase</keyword>
<keyword id="KW-0460">Magnesium</keyword>
<keyword id="KW-0479">Metal-binding</keyword>
<keyword id="KW-1185">Reference proteome</keyword>
<keyword id="KW-0862">Zinc</keyword>
<reference key="1">
    <citation type="journal article" date="2004" name="PLoS Biol.">
        <title>Genomic insights into methanotrophy: the complete genome sequence of Methylococcus capsulatus (Bath).</title>
        <authorList>
            <person name="Ward N.L."/>
            <person name="Larsen O."/>
            <person name="Sakwa J."/>
            <person name="Bruseth L."/>
            <person name="Khouri H.M."/>
            <person name="Durkin A.S."/>
            <person name="Dimitrov G."/>
            <person name="Jiang L."/>
            <person name="Scanlan D."/>
            <person name="Kang K.H."/>
            <person name="Lewis M.R."/>
            <person name="Nelson K.E."/>
            <person name="Methe B.A."/>
            <person name="Wu M."/>
            <person name="Heidelberg J.F."/>
            <person name="Paulsen I.T."/>
            <person name="Fouts D.E."/>
            <person name="Ravel J."/>
            <person name="Tettelin H."/>
            <person name="Ren Q."/>
            <person name="Read T.D."/>
            <person name="DeBoy R.T."/>
            <person name="Seshadri R."/>
            <person name="Salzberg S.L."/>
            <person name="Jensen H.B."/>
            <person name="Birkeland N.K."/>
            <person name="Nelson W.C."/>
            <person name="Dodson R.J."/>
            <person name="Grindhaug S.H."/>
            <person name="Holt I.E."/>
            <person name="Eidhammer I."/>
            <person name="Jonasen I."/>
            <person name="Vanaken S."/>
            <person name="Utterback T.R."/>
            <person name="Feldblyum T.V."/>
            <person name="Fraser C.M."/>
            <person name="Lillehaug J.R."/>
            <person name="Eisen J.A."/>
        </authorList>
    </citation>
    <scope>NUCLEOTIDE SEQUENCE [LARGE SCALE GENOMIC DNA]</scope>
    <source>
        <strain>ATCC 33009 / NCIMB 11132 / Bath</strain>
    </source>
</reference>
<sequence>MSAWLDEIRWTADGLVPVVAQEAGTGQVLMVAWMNREALALTAAEGYAVYWSRSRGRLWRKGEESGHRQKVLEIRIDCDEDVVLLKVEQAGGIACHTGRHHCFYRVLQDGRWVTVEPVLKPPDSIYGA</sequence>
<comment type="function">
    <text evidence="1">Catalyzes the hydrolysis of the adenine ring of phosphoribosyl-AMP.</text>
</comment>
<comment type="catalytic activity">
    <reaction evidence="1">
        <text>1-(5-phospho-beta-D-ribosyl)-5'-AMP + H2O = 1-(5-phospho-beta-D-ribosyl)-5-[(5-phospho-beta-D-ribosylamino)methylideneamino]imidazole-4-carboxamide</text>
        <dbReference type="Rhea" id="RHEA:20049"/>
        <dbReference type="ChEBI" id="CHEBI:15377"/>
        <dbReference type="ChEBI" id="CHEBI:58435"/>
        <dbReference type="ChEBI" id="CHEBI:59457"/>
        <dbReference type="EC" id="3.5.4.19"/>
    </reaction>
</comment>
<comment type="cofactor">
    <cofactor evidence="1">
        <name>Mg(2+)</name>
        <dbReference type="ChEBI" id="CHEBI:18420"/>
    </cofactor>
    <text evidence="1">Binds 1 Mg(2+) ion per subunit.</text>
</comment>
<comment type="cofactor">
    <cofactor evidence="1">
        <name>Zn(2+)</name>
        <dbReference type="ChEBI" id="CHEBI:29105"/>
    </cofactor>
    <text evidence="1">Binds 1 zinc ion per subunit.</text>
</comment>
<comment type="pathway">
    <text evidence="1">Amino-acid biosynthesis; L-histidine biosynthesis; L-histidine from 5-phospho-alpha-D-ribose 1-diphosphate: step 3/9.</text>
</comment>
<comment type="subunit">
    <text evidence="1">Homodimer.</text>
</comment>
<comment type="subcellular location">
    <subcellularLocation>
        <location evidence="1">Cytoplasm</location>
    </subcellularLocation>
</comment>
<comment type="similarity">
    <text evidence="1">Belongs to the PRA-CH family.</text>
</comment>
<evidence type="ECO:0000255" key="1">
    <source>
        <dbReference type="HAMAP-Rule" id="MF_01021"/>
    </source>
</evidence>
<gene>
    <name evidence="1" type="primary">hisI</name>
    <name type="ordered locus">MCA2801</name>
</gene>
<protein>
    <recommendedName>
        <fullName evidence="1">Phosphoribosyl-AMP cyclohydrolase</fullName>
        <shortName evidence="1">PRA-CH</shortName>
        <ecNumber evidence="1">3.5.4.19</ecNumber>
    </recommendedName>
</protein>
<proteinExistence type="inferred from homology"/>
<name>HIS3_METCA</name>
<feature type="chain" id="PRO_0000229825" description="Phosphoribosyl-AMP cyclohydrolase">
    <location>
        <begin position="1"/>
        <end position="128"/>
    </location>
</feature>
<feature type="binding site" evidence="1">
    <location>
        <position position="77"/>
    </location>
    <ligand>
        <name>Mg(2+)</name>
        <dbReference type="ChEBI" id="CHEBI:18420"/>
    </ligand>
</feature>
<feature type="binding site" evidence="1">
    <location>
        <position position="78"/>
    </location>
    <ligand>
        <name>Zn(2+)</name>
        <dbReference type="ChEBI" id="CHEBI:29105"/>
        <note>ligand shared between dimeric partners</note>
    </ligand>
</feature>
<feature type="binding site" evidence="1">
    <location>
        <position position="79"/>
    </location>
    <ligand>
        <name>Mg(2+)</name>
        <dbReference type="ChEBI" id="CHEBI:18420"/>
    </ligand>
</feature>
<feature type="binding site" evidence="1">
    <location>
        <position position="81"/>
    </location>
    <ligand>
        <name>Mg(2+)</name>
        <dbReference type="ChEBI" id="CHEBI:18420"/>
    </ligand>
</feature>
<feature type="binding site" evidence="1">
    <location>
        <position position="95"/>
    </location>
    <ligand>
        <name>Zn(2+)</name>
        <dbReference type="ChEBI" id="CHEBI:29105"/>
        <note>ligand shared between dimeric partners</note>
    </ligand>
</feature>
<feature type="binding site" evidence="1">
    <location>
        <position position="102"/>
    </location>
    <ligand>
        <name>Zn(2+)</name>
        <dbReference type="ChEBI" id="CHEBI:29105"/>
        <note>ligand shared between dimeric partners</note>
    </ligand>
</feature>
<accession>Q603K4</accession>
<organism>
    <name type="scientific">Methylococcus capsulatus (strain ATCC 33009 / NCIMB 11132 / Bath)</name>
    <dbReference type="NCBI Taxonomy" id="243233"/>
    <lineage>
        <taxon>Bacteria</taxon>
        <taxon>Pseudomonadati</taxon>
        <taxon>Pseudomonadota</taxon>
        <taxon>Gammaproteobacteria</taxon>
        <taxon>Methylococcales</taxon>
        <taxon>Methylococcaceae</taxon>
        <taxon>Methylococcus</taxon>
    </lineage>
</organism>
<dbReference type="EC" id="3.5.4.19" evidence="1"/>
<dbReference type="EMBL" id="AE017282">
    <property type="protein sequence ID" value="AAU91080.1"/>
    <property type="molecule type" value="Genomic_DNA"/>
</dbReference>
<dbReference type="RefSeq" id="WP_010962002.1">
    <property type="nucleotide sequence ID" value="NC_002977.6"/>
</dbReference>
<dbReference type="SMR" id="Q603K4"/>
<dbReference type="STRING" id="243233.MCA2801"/>
<dbReference type="GeneID" id="88224977"/>
<dbReference type="KEGG" id="mca:MCA2801"/>
<dbReference type="eggNOG" id="COG0139">
    <property type="taxonomic scope" value="Bacteria"/>
</dbReference>
<dbReference type="HOGENOM" id="CLU_048577_5_0_6"/>
<dbReference type="UniPathway" id="UPA00031">
    <property type="reaction ID" value="UER00008"/>
</dbReference>
<dbReference type="Proteomes" id="UP000006821">
    <property type="component" value="Chromosome"/>
</dbReference>
<dbReference type="GO" id="GO:0005737">
    <property type="term" value="C:cytoplasm"/>
    <property type="evidence" value="ECO:0007669"/>
    <property type="project" value="UniProtKB-SubCell"/>
</dbReference>
<dbReference type="GO" id="GO:0000287">
    <property type="term" value="F:magnesium ion binding"/>
    <property type="evidence" value="ECO:0007669"/>
    <property type="project" value="UniProtKB-UniRule"/>
</dbReference>
<dbReference type="GO" id="GO:0004635">
    <property type="term" value="F:phosphoribosyl-AMP cyclohydrolase activity"/>
    <property type="evidence" value="ECO:0007669"/>
    <property type="project" value="UniProtKB-UniRule"/>
</dbReference>
<dbReference type="GO" id="GO:0008270">
    <property type="term" value="F:zinc ion binding"/>
    <property type="evidence" value="ECO:0007669"/>
    <property type="project" value="UniProtKB-UniRule"/>
</dbReference>
<dbReference type="GO" id="GO:0000105">
    <property type="term" value="P:L-histidine biosynthetic process"/>
    <property type="evidence" value="ECO:0007669"/>
    <property type="project" value="UniProtKB-UniRule"/>
</dbReference>
<dbReference type="FunFam" id="3.10.20.810:FF:000001">
    <property type="entry name" value="Histidine biosynthesis bifunctional protein HisIE"/>
    <property type="match status" value="1"/>
</dbReference>
<dbReference type="Gene3D" id="3.10.20.810">
    <property type="entry name" value="Phosphoribosyl-AMP cyclohydrolase"/>
    <property type="match status" value="1"/>
</dbReference>
<dbReference type="HAMAP" id="MF_01021">
    <property type="entry name" value="HisI"/>
    <property type="match status" value="1"/>
</dbReference>
<dbReference type="InterPro" id="IPR026660">
    <property type="entry name" value="PRA-CH"/>
</dbReference>
<dbReference type="InterPro" id="IPR002496">
    <property type="entry name" value="PRib_AMP_CycHydrolase_dom"/>
</dbReference>
<dbReference type="InterPro" id="IPR038019">
    <property type="entry name" value="PRib_AMP_CycHydrolase_sf"/>
</dbReference>
<dbReference type="NCBIfam" id="NF000768">
    <property type="entry name" value="PRK00051.1"/>
    <property type="match status" value="1"/>
</dbReference>
<dbReference type="PANTHER" id="PTHR42945">
    <property type="entry name" value="HISTIDINE BIOSYNTHESIS BIFUNCTIONAL PROTEIN"/>
    <property type="match status" value="1"/>
</dbReference>
<dbReference type="PANTHER" id="PTHR42945:SF1">
    <property type="entry name" value="HISTIDINE BIOSYNTHESIS BIFUNCTIONAL PROTEIN HIS7"/>
    <property type="match status" value="1"/>
</dbReference>
<dbReference type="Pfam" id="PF01502">
    <property type="entry name" value="PRA-CH"/>
    <property type="match status" value="1"/>
</dbReference>
<dbReference type="SUPFAM" id="SSF141734">
    <property type="entry name" value="HisI-like"/>
    <property type="match status" value="1"/>
</dbReference>